<keyword id="KW-0004">4Fe-4S</keyword>
<keyword id="KW-0408">Iron</keyword>
<keyword id="KW-0411">Iron-sulfur</keyword>
<keyword id="KW-0456">Lyase</keyword>
<keyword id="KW-0479">Metal-binding</keyword>
<keyword id="KW-0535">Nitrogen fixation</keyword>
<keyword id="KW-1185">Reference proteome</keyword>
<keyword id="KW-0949">S-adenosyl-L-methionine</keyword>
<feature type="chain" id="PRO_0000153050" description="FeMo cofactor biosynthesis protein NifB">
    <location>
        <begin position="1"/>
        <end position="300"/>
    </location>
</feature>
<feature type="domain" description="Radical SAM core" evidence="3">
    <location>
        <begin position="24"/>
        <end position="266"/>
    </location>
</feature>
<feature type="binding site" evidence="1 2">
    <location>
        <position position="38"/>
    </location>
    <ligand>
        <name>[4Fe-4S] cluster</name>
        <dbReference type="ChEBI" id="CHEBI:49883"/>
        <label>1</label>
        <note>4Fe-4S-S-AdoMet</note>
    </ligand>
</feature>
<feature type="binding site" evidence="1 2">
    <location>
        <position position="42"/>
    </location>
    <ligand>
        <name>[4Fe-4S] cluster</name>
        <dbReference type="ChEBI" id="CHEBI:49883"/>
        <label>1</label>
        <note>4Fe-4S-S-AdoMet</note>
    </ligand>
</feature>
<feature type="binding site" evidence="1 2">
    <location>
        <position position="45"/>
    </location>
    <ligand>
        <name>[4Fe-4S] cluster</name>
        <dbReference type="ChEBI" id="CHEBI:49883"/>
        <label>1</label>
        <note>4Fe-4S-S-AdoMet</note>
    </ligand>
</feature>
<feature type="binding site" evidence="2">
    <location>
        <position position="93"/>
    </location>
    <ligand>
        <name>S-adenosyl-L-methionine</name>
        <dbReference type="ChEBI" id="CHEBI:59789"/>
    </ligand>
</feature>
<feature type="binding site" evidence="2">
    <location>
        <position position="144"/>
    </location>
    <ligand>
        <name>S-adenosyl-L-methionine</name>
        <dbReference type="ChEBI" id="CHEBI:59789"/>
    </ligand>
</feature>
<feature type="binding site" evidence="2">
    <location>
        <position position="196"/>
    </location>
    <ligand>
        <name>S-adenosyl-L-methionine</name>
        <dbReference type="ChEBI" id="CHEBI:59789"/>
    </ligand>
</feature>
<feature type="binding site" evidence="1">
    <location>
        <position position="262"/>
    </location>
    <ligand>
        <name>[4Fe-4S] cluster</name>
        <dbReference type="ChEBI" id="CHEBI:49883"/>
        <label>2</label>
    </ligand>
</feature>
<feature type="binding site" evidence="1">
    <location>
        <position position="265"/>
    </location>
    <ligand>
        <name>[4Fe-4S] cluster</name>
        <dbReference type="ChEBI" id="CHEBI:49883"/>
        <label>2</label>
    </ligand>
</feature>
<dbReference type="EC" id="4.-.-.-"/>
<dbReference type="EMBL" id="L77117">
    <property type="protein sequence ID" value="AAB99096.1"/>
    <property type="molecule type" value="Genomic_DNA"/>
</dbReference>
<dbReference type="PIR" id="D64436">
    <property type="entry name" value="D64436"/>
</dbReference>
<dbReference type="RefSeq" id="WP_010870605.1">
    <property type="nucleotide sequence ID" value="NC_000909.1"/>
</dbReference>
<dbReference type="SMR" id="Q58493"/>
<dbReference type="STRING" id="243232.MJ_1093"/>
<dbReference type="PaxDb" id="243232-MJ_1093"/>
<dbReference type="EnsemblBacteria" id="AAB99096">
    <property type="protein sequence ID" value="AAB99096"/>
    <property type="gene ID" value="MJ_1093"/>
</dbReference>
<dbReference type="GeneID" id="1451989"/>
<dbReference type="KEGG" id="mja:MJ_1093"/>
<dbReference type="eggNOG" id="arCOG00956">
    <property type="taxonomic scope" value="Archaea"/>
</dbReference>
<dbReference type="HOGENOM" id="CLU_027639_1_0_2"/>
<dbReference type="InParanoid" id="Q58493"/>
<dbReference type="OrthoDB" id="53113at2157"/>
<dbReference type="PhylomeDB" id="Q58493"/>
<dbReference type="UniPathway" id="UPA00782"/>
<dbReference type="Proteomes" id="UP000000805">
    <property type="component" value="Chromosome"/>
</dbReference>
<dbReference type="GO" id="GO:0051539">
    <property type="term" value="F:4 iron, 4 sulfur cluster binding"/>
    <property type="evidence" value="ECO:0007669"/>
    <property type="project" value="UniProtKB-KW"/>
</dbReference>
<dbReference type="GO" id="GO:0016829">
    <property type="term" value="F:lyase activity"/>
    <property type="evidence" value="ECO:0007669"/>
    <property type="project" value="UniProtKB-KW"/>
</dbReference>
<dbReference type="GO" id="GO:0046872">
    <property type="term" value="F:metal ion binding"/>
    <property type="evidence" value="ECO:0007669"/>
    <property type="project" value="UniProtKB-KW"/>
</dbReference>
<dbReference type="GO" id="GO:0009399">
    <property type="term" value="P:nitrogen fixation"/>
    <property type="evidence" value="ECO:0007669"/>
    <property type="project" value="UniProtKB-KW"/>
</dbReference>
<dbReference type="CDD" id="cd01335">
    <property type="entry name" value="Radical_SAM"/>
    <property type="match status" value="1"/>
</dbReference>
<dbReference type="Gene3D" id="3.20.20.70">
    <property type="entry name" value="Aldolase class I"/>
    <property type="match status" value="1"/>
</dbReference>
<dbReference type="InterPro" id="IPR013785">
    <property type="entry name" value="Aldolase_TIM"/>
</dbReference>
<dbReference type="InterPro" id="IPR006638">
    <property type="entry name" value="Elp3/MiaA/NifB-like_rSAM"/>
</dbReference>
<dbReference type="InterPro" id="IPR007197">
    <property type="entry name" value="rSAM"/>
</dbReference>
<dbReference type="PANTHER" id="PTHR43787:SF13">
    <property type="entry name" value="FEMO COFACTOR BIOSYNTHESIS PROTEIN NIFB"/>
    <property type="match status" value="1"/>
</dbReference>
<dbReference type="PANTHER" id="PTHR43787">
    <property type="entry name" value="FEMO COFACTOR BIOSYNTHESIS PROTEIN NIFB-RELATED"/>
    <property type="match status" value="1"/>
</dbReference>
<dbReference type="Pfam" id="PF04055">
    <property type="entry name" value="Radical_SAM"/>
    <property type="match status" value="1"/>
</dbReference>
<dbReference type="SFLD" id="SFLDG01068">
    <property type="entry name" value="FeMo_cofactor_biosynthesis_pro"/>
    <property type="match status" value="1"/>
</dbReference>
<dbReference type="SFLD" id="SFLDS00029">
    <property type="entry name" value="Radical_SAM"/>
    <property type="match status" value="1"/>
</dbReference>
<dbReference type="SFLD" id="SFLDG01067">
    <property type="entry name" value="SPASM/twitch_domain_containing"/>
    <property type="match status" value="1"/>
</dbReference>
<dbReference type="SMART" id="SM00729">
    <property type="entry name" value="Elp3"/>
    <property type="match status" value="1"/>
</dbReference>
<dbReference type="SUPFAM" id="SSF102114">
    <property type="entry name" value="Radical SAM enzymes"/>
    <property type="match status" value="1"/>
</dbReference>
<dbReference type="PROSITE" id="PS51918">
    <property type="entry name" value="RADICAL_SAM"/>
    <property type="match status" value="1"/>
</dbReference>
<reference key="1">
    <citation type="journal article" date="1996" name="Science">
        <title>Complete genome sequence of the methanogenic archaeon, Methanococcus jannaschii.</title>
        <authorList>
            <person name="Bult C.J."/>
            <person name="White O."/>
            <person name="Olsen G.J."/>
            <person name="Zhou L."/>
            <person name="Fleischmann R.D."/>
            <person name="Sutton G.G."/>
            <person name="Blake J.A."/>
            <person name="FitzGerald L.M."/>
            <person name="Clayton R.A."/>
            <person name="Gocayne J.D."/>
            <person name="Kerlavage A.R."/>
            <person name="Dougherty B.A."/>
            <person name="Tomb J.-F."/>
            <person name="Adams M.D."/>
            <person name="Reich C.I."/>
            <person name="Overbeek R."/>
            <person name="Kirkness E.F."/>
            <person name="Weinstock K.G."/>
            <person name="Merrick J.M."/>
            <person name="Glodek A."/>
            <person name="Scott J.L."/>
            <person name="Geoghagen N.S.M."/>
            <person name="Weidman J.F."/>
            <person name="Fuhrmann J.L."/>
            <person name="Nguyen D."/>
            <person name="Utterback T.R."/>
            <person name="Kelley J.M."/>
            <person name="Peterson J.D."/>
            <person name="Sadow P.W."/>
            <person name="Hanna M.C."/>
            <person name="Cotton M.D."/>
            <person name="Roberts K.M."/>
            <person name="Hurst M.A."/>
            <person name="Kaine B.P."/>
            <person name="Borodovsky M."/>
            <person name="Klenk H.-P."/>
            <person name="Fraser C.M."/>
            <person name="Smith H.O."/>
            <person name="Woese C.R."/>
            <person name="Venter J.C."/>
        </authorList>
    </citation>
    <scope>NUCLEOTIDE SEQUENCE [LARGE SCALE GENOMIC DNA]</scope>
    <source>
        <strain>ATCC 43067 / DSM 2661 / JAL-1 / JCM 10045 / NBRC 100440</strain>
    </source>
</reference>
<organism>
    <name type="scientific">Methanocaldococcus jannaschii (strain ATCC 43067 / DSM 2661 / JAL-1 / JCM 10045 / NBRC 100440)</name>
    <name type="common">Methanococcus jannaschii</name>
    <dbReference type="NCBI Taxonomy" id="243232"/>
    <lineage>
        <taxon>Archaea</taxon>
        <taxon>Methanobacteriati</taxon>
        <taxon>Methanobacteriota</taxon>
        <taxon>Methanomada group</taxon>
        <taxon>Methanococci</taxon>
        <taxon>Methanococcales</taxon>
        <taxon>Methanocaldococcaceae</taxon>
        <taxon>Methanocaldococcus</taxon>
    </lineage>
</organism>
<sequence>MDKNKMSKFAHITKVHPCFNEKIHDKVGRVHLPVAPRCNIACKFCRRSLGKEACEHRPGVALSVLKPEDVESYLNKVLKEIPNIKVVGIAGPGDSLFNKETFETLKIIDEKFPNLIKCLSTNGLLLNKYYKKLADLNVKTVTVTVNAIDPEILKEIVEWVYYDKKVHYGIEGAKILIENQIDGIKKAYDEDLIIKINTVLIPEINMNHVVDIAKELKDFVYIQNIIPLIPLYKMSHLRPPTCEELKKVREECEKYIPQFRACGQCRADAVGLIKERKILEEFFKEKNKKLNVFELKHFSH</sequence>
<comment type="function">
    <text evidence="1">Involved in the biosynthesis of the iron-molybdenum cofactor (FeMo-co or M-cluster) found in the dinitrogenase enzyme of the nitrogenase complex in nitrogen-fixing microorganisms. NifB catalyzes the crucial step of radical SAM-dependent carbide insertion that occurs concomitant with the insertion of a 9th sulfur and the rearrangement/coupling of two [4Fe-4S] clusters into a [8Fe-9S-C] cluster, the precursor to the M-cluster.</text>
</comment>
<comment type="cofactor">
    <cofactor evidence="1">
        <name>[4Fe-4S] cluster</name>
        <dbReference type="ChEBI" id="CHEBI:49883"/>
    </cofactor>
    <text evidence="1">Binds 3 [4Fe-4S] clusters per monomer. One cluster is coordinated with 3 cysteines and an exchangeable S-adenosyl-L-methionine. The two others probably act as substrate.</text>
</comment>
<comment type="pathway">
    <text evidence="1">Cofactor biosynthesis; Fe-Mo cofactor biosynthesis.</text>
</comment>
<comment type="subunit">
    <text evidence="1">Monomer.</text>
</comment>
<comment type="similarity">
    <text evidence="4">Belongs to the radical SAM superfamily. NifB family.</text>
</comment>
<gene>
    <name evidence="1" type="primary">nifB</name>
    <name type="ordered locus">MJ1093</name>
</gene>
<protein>
    <recommendedName>
        <fullName evidence="1">FeMo cofactor biosynthesis protein NifB</fullName>
        <ecNumber>4.-.-.-</ecNumber>
    </recommendedName>
    <alternativeName>
        <fullName>Nitrogenase cofactor maturase NifB</fullName>
    </alternativeName>
    <alternativeName>
        <fullName>Radical SAM assemblase NifB</fullName>
    </alternativeName>
</protein>
<name>NIFB_METJA</name>
<proteinExistence type="inferred from homology"/>
<accession>Q58493</accession>
<evidence type="ECO:0000250" key="1">
    <source>
        <dbReference type="UniProtKB" id="D5VRM1"/>
    </source>
</evidence>
<evidence type="ECO:0000250" key="2">
    <source>
        <dbReference type="UniProtKB" id="P69848"/>
    </source>
</evidence>
<evidence type="ECO:0000255" key="3">
    <source>
        <dbReference type="PROSITE-ProRule" id="PRU01266"/>
    </source>
</evidence>
<evidence type="ECO:0000305" key="4"/>